<comment type="function">
    <text evidence="1">Catalyzes the reversible cyclization of carbamoyl aspartate to dihydroorotate.</text>
</comment>
<comment type="catalytic activity">
    <reaction evidence="1">
        <text>(S)-dihydroorotate + H2O = N-carbamoyl-L-aspartate + H(+)</text>
        <dbReference type="Rhea" id="RHEA:24296"/>
        <dbReference type="ChEBI" id="CHEBI:15377"/>
        <dbReference type="ChEBI" id="CHEBI:15378"/>
        <dbReference type="ChEBI" id="CHEBI:30864"/>
        <dbReference type="ChEBI" id="CHEBI:32814"/>
        <dbReference type="EC" id="3.5.2.3"/>
    </reaction>
</comment>
<comment type="cofactor">
    <cofactor evidence="1">
        <name>Zn(2+)</name>
        <dbReference type="ChEBI" id="CHEBI:29105"/>
    </cofactor>
    <text evidence="1">Binds 2 Zn(2+) ions per subunit.</text>
</comment>
<comment type="pathway">
    <text evidence="1">Pyrimidine metabolism; UMP biosynthesis via de novo pathway; (S)-dihydroorotate from bicarbonate: step 3/3.</text>
</comment>
<comment type="similarity">
    <text evidence="1">Belongs to the metallo-dependent hydrolases superfamily. DHOase family. Class I DHOase subfamily.</text>
</comment>
<organism>
    <name type="scientific">Ehrlichia canis (strain Jake)</name>
    <dbReference type="NCBI Taxonomy" id="269484"/>
    <lineage>
        <taxon>Bacteria</taxon>
        <taxon>Pseudomonadati</taxon>
        <taxon>Pseudomonadota</taxon>
        <taxon>Alphaproteobacteria</taxon>
        <taxon>Rickettsiales</taxon>
        <taxon>Anaplasmataceae</taxon>
        <taxon>Ehrlichia</taxon>
    </lineage>
</organism>
<accession>Q3YRI2</accession>
<name>PYRC_EHRCJ</name>
<protein>
    <recommendedName>
        <fullName evidence="1">Dihydroorotase</fullName>
        <shortName evidence="1">DHOase</shortName>
        <ecNumber evidence="1">3.5.2.3</ecNumber>
    </recommendedName>
</protein>
<sequence length="447" mass="49115">MYKQSWKLLGRGQDADFTVAYINARIIDPESKLDIIGSLLTKGDKIVDFGQDLFNNGIPSTIDEVVDCNNNILMPGLIDIHVHFREPGQEHKETIHTGSKSAAAGGVTTVVCQPNTIPTISSIITAKYIKMRALESAYVNIEFYASITKPDNSLSDMALLKEAGAVGFTDDGMPVMNSLTMRQALSYSSMLDTVVAQHAEDLNLSNNGHINEGTVSYELGLKGIPDISESIIVNRDIALMKNIKNVHYHILHVSSQDSLNIIKQAKNQGLKVTCEVTPHHLTLTEQDVITHGTLAKINPPLRTENDRLSMVEGLKNGIIDCIATDHAPHEVNTKELPLDTAAFGIVGLETMLPISLELYHNGTISLIDLLATLTYKPANIIKVPRGRIKKGFVADLIILDLNHEWTIDILKFASKSKNSPFHNRKVKGKVLRTIVSGKTTYTAVRNI</sequence>
<feature type="chain" id="PRO_0000325592" description="Dihydroorotase">
    <location>
        <begin position="1"/>
        <end position="447"/>
    </location>
</feature>
<feature type="active site" evidence="1">
    <location>
        <position position="325"/>
    </location>
</feature>
<feature type="binding site" evidence="1">
    <location>
        <position position="81"/>
    </location>
    <ligand>
        <name>Zn(2+)</name>
        <dbReference type="ChEBI" id="CHEBI:29105"/>
        <label>1</label>
    </ligand>
</feature>
<feature type="binding site" evidence="1">
    <location>
        <begin position="83"/>
        <end position="85"/>
    </location>
    <ligand>
        <name>substrate</name>
    </ligand>
</feature>
<feature type="binding site" evidence="1">
    <location>
        <position position="83"/>
    </location>
    <ligand>
        <name>Zn(2+)</name>
        <dbReference type="ChEBI" id="CHEBI:29105"/>
        <label>1</label>
    </ligand>
</feature>
<feature type="binding site" evidence="1">
    <location>
        <position position="115"/>
    </location>
    <ligand>
        <name>substrate</name>
    </ligand>
</feature>
<feature type="binding site" evidence="1">
    <location>
        <position position="171"/>
    </location>
    <ligand>
        <name>Zn(2+)</name>
        <dbReference type="ChEBI" id="CHEBI:29105"/>
        <label>1</label>
    </ligand>
</feature>
<feature type="binding site" evidence="1">
    <location>
        <position position="171"/>
    </location>
    <ligand>
        <name>Zn(2+)</name>
        <dbReference type="ChEBI" id="CHEBI:29105"/>
        <label>2</label>
    </ligand>
</feature>
<feature type="binding site" evidence="1">
    <location>
        <position position="198"/>
    </location>
    <ligand>
        <name>Zn(2+)</name>
        <dbReference type="ChEBI" id="CHEBI:29105"/>
        <label>2</label>
    </ligand>
</feature>
<feature type="binding site" evidence="1">
    <location>
        <position position="252"/>
    </location>
    <ligand>
        <name>Zn(2+)</name>
        <dbReference type="ChEBI" id="CHEBI:29105"/>
        <label>2</label>
    </ligand>
</feature>
<feature type="binding site" evidence="1">
    <location>
        <position position="298"/>
    </location>
    <ligand>
        <name>substrate</name>
    </ligand>
</feature>
<feature type="binding site" evidence="1">
    <location>
        <position position="325"/>
    </location>
    <ligand>
        <name>Zn(2+)</name>
        <dbReference type="ChEBI" id="CHEBI:29105"/>
        <label>1</label>
    </ligand>
</feature>
<feature type="binding site" evidence="1">
    <location>
        <position position="329"/>
    </location>
    <ligand>
        <name>substrate</name>
    </ligand>
</feature>
<feature type="binding site" evidence="1">
    <location>
        <begin position="343"/>
        <end position="344"/>
    </location>
    <ligand>
        <name>substrate</name>
    </ligand>
</feature>
<reference key="1">
    <citation type="journal article" date="2006" name="J. Bacteriol.">
        <title>The genome of the obligately intracellular bacterium Ehrlichia canis reveals themes of complex membrane structure and immune evasion strategies.</title>
        <authorList>
            <person name="Mavromatis K."/>
            <person name="Doyle C.K."/>
            <person name="Lykidis A."/>
            <person name="Ivanova N."/>
            <person name="Francino M.P."/>
            <person name="Chain P."/>
            <person name="Shin M."/>
            <person name="Malfatti S."/>
            <person name="Larimer F."/>
            <person name="Copeland A."/>
            <person name="Detter J.C."/>
            <person name="Land M."/>
            <person name="Richardson P.M."/>
            <person name="Yu X.J."/>
            <person name="Walker D.H."/>
            <person name="McBride J.W."/>
            <person name="Kyrpides N.C."/>
        </authorList>
    </citation>
    <scope>NUCLEOTIDE SEQUENCE [LARGE SCALE GENOMIC DNA]</scope>
    <source>
        <strain>Jake</strain>
    </source>
</reference>
<evidence type="ECO:0000255" key="1">
    <source>
        <dbReference type="HAMAP-Rule" id="MF_00220"/>
    </source>
</evidence>
<gene>
    <name evidence="1" type="primary">pyrC</name>
    <name type="ordered locus">Ecaj_0639</name>
</gene>
<keyword id="KW-0378">Hydrolase</keyword>
<keyword id="KW-0479">Metal-binding</keyword>
<keyword id="KW-0665">Pyrimidine biosynthesis</keyword>
<keyword id="KW-0862">Zinc</keyword>
<proteinExistence type="inferred from homology"/>
<dbReference type="EC" id="3.5.2.3" evidence="1"/>
<dbReference type="EMBL" id="CP000107">
    <property type="protein sequence ID" value="AAZ68673.1"/>
    <property type="molecule type" value="Genomic_DNA"/>
</dbReference>
<dbReference type="RefSeq" id="WP_011304750.1">
    <property type="nucleotide sequence ID" value="NC_007354.1"/>
</dbReference>
<dbReference type="SMR" id="Q3YRI2"/>
<dbReference type="FunCoup" id="Q3YRI2">
    <property type="interactions" value="267"/>
</dbReference>
<dbReference type="STRING" id="269484.Ecaj_0639"/>
<dbReference type="KEGG" id="ecn:Ecaj_0639"/>
<dbReference type="eggNOG" id="COG0044">
    <property type="taxonomic scope" value="Bacteria"/>
</dbReference>
<dbReference type="HOGENOM" id="CLU_015572_1_0_5"/>
<dbReference type="InParanoid" id="Q3YRI2"/>
<dbReference type="UniPathway" id="UPA00070">
    <property type="reaction ID" value="UER00117"/>
</dbReference>
<dbReference type="Proteomes" id="UP000000435">
    <property type="component" value="Chromosome"/>
</dbReference>
<dbReference type="GO" id="GO:0005737">
    <property type="term" value="C:cytoplasm"/>
    <property type="evidence" value="ECO:0007669"/>
    <property type="project" value="TreeGrafter"/>
</dbReference>
<dbReference type="GO" id="GO:0004038">
    <property type="term" value="F:allantoinase activity"/>
    <property type="evidence" value="ECO:0007669"/>
    <property type="project" value="TreeGrafter"/>
</dbReference>
<dbReference type="GO" id="GO:0004151">
    <property type="term" value="F:dihydroorotase activity"/>
    <property type="evidence" value="ECO:0007669"/>
    <property type="project" value="UniProtKB-UniRule"/>
</dbReference>
<dbReference type="GO" id="GO:0008270">
    <property type="term" value="F:zinc ion binding"/>
    <property type="evidence" value="ECO:0007669"/>
    <property type="project" value="UniProtKB-UniRule"/>
</dbReference>
<dbReference type="GO" id="GO:0044205">
    <property type="term" value="P:'de novo' UMP biosynthetic process"/>
    <property type="evidence" value="ECO:0007669"/>
    <property type="project" value="UniProtKB-UniRule"/>
</dbReference>
<dbReference type="GO" id="GO:0006145">
    <property type="term" value="P:purine nucleobase catabolic process"/>
    <property type="evidence" value="ECO:0007669"/>
    <property type="project" value="TreeGrafter"/>
</dbReference>
<dbReference type="CDD" id="cd01317">
    <property type="entry name" value="DHOase_IIa"/>
    <property type="match status" value="1"/>
</dbReference>
<dbReference type="Gene3D" id="3.20.20.140">
    <property type="entry name" value="Metal-dependent hydrolases"/>
    <property type="match status" value="1"/>
</dbReference>
<dbReference type="Gene3D" id="2.30.40.10">
    <property type="entry name" value="Urease, subunit C, domain 1"/>
    <property type="match status" value="1"/>
</dbReference>
<dbReference type="HAMAP" id="MF_00220_B">
    <property type="entry name" value="PyrC_classI_B"/>
    <property type="match status" value="1"/>
</dbReference>
<dbReference type="InterPro" id="IPR006680">
    <property type="entry name" value="Amidohydro-rel"/>
</dbReference>
<dbReference type="InterPro" id="IPR004722">
    <property type="entry name" value="DHOase"/>
</dbReference>
<dbReference type="InterPro" id="IPR050138">
    <property type="entry name" value="DHOase/Allantoinase_Hydrolase"/>
</dbReference>
<dbReference type="InterPro" id="IPR002195">
    <property type="entry name" value="Dihydroorotase_CS"/>
</dbReference>
<dbReference type="InterPro" id="IPR011059">
    <property type="entry name" value="Metal-dep_hydrolase_composite"/>
</dbReference>
<dbReference type="InterPro" id="IPR032466">
    <property type="entry name" value="Metal_Hydrolase"/>
</dbReference>
<dbReference type="NCBIfam" id="TIGR00857">
    <property type="entry name" value="pyrC_multi"/>
    <property type="match status" value="1"/>
</dbReference>
<dbReference type="PANTHER" id="PTHR43668">
    <property type="entry name" value="ALLANTOINASE"/>
    <property type="match status" value="1"/>
</dbReference>
<dbReference type="PANTHER" id="PTHR43668:SF2">
    <property type="entry name" value="ALLANTOINASE"/>
    <property type="match status" value="1"/>
</dbReference>
<dbReference type="Pfam" id="PF01979">
    <property type="entry name" value="Amidohydro_1"/>
    <property type="match status" value="1"/>
</dbReference>
<dbReference type="SUPFAM" id="SSF51338">
    <property type="entry name" value="Composite domain of metallo-dependent hydrolases"/>
    <property type="match status" value="1"/>
</dbReference>
<dbReference type="SUPFAM" id="SSF51556">
    <property type="entry name" value="Metallo-dependent hydrolases"/>
    <property type="match status" value="1"/>
</dbReference>
<dbReference type="PROSITE" id="PS00482">
    <property type="entry name" value="DIHYDROOROTASE_1"/>
    <property type="match status" value="1"/>
</dbReference>
<dbReference type="PROSITE" id="PS00483">
    <property type="entry name" value="DIHYDROOROTASE_2"/>
    <property type="match status" value="1"/>
</dbReference>